<name>DPO3A_CHLPN</name>
<sequence length="1240" mass="140076">MTWIPLHCHSQYSVLDAMSSIKDFVAKGQEFGIPALALTDHGNLYGAVDFYKECTQKGIQPIIGCECYIAPGSRFDKKKEKRSRAAHHLILLCKNEQGYRNLCILTSLAFTEGFYYFPRIDKDLLRQYSEGLICLSGCLSSSVSDAALKSPEALLLELQWFQDLFKDDYFTEVQLHKMSEESIAGFKEEWLKQEYYSLIEKQIKVNTAVLEASKRLGIPTVATNDIHYINANDWQAHEILLNVQSGETVRIAKQNTHIPNPKRKVYRSREYYFKSPAQMAELFKDIPEVISNTLEVAKRCDFTFDFSKKHYPIYVPESLKTLNSYTEEDRYQASAVFLKQLAEEALPKKYSSEVLAHIAKKFPHRDPIDIVKERMDMEMAIIIPKGMCDYLLIVWDIIHWAKANGIPVGPGRGSGAGSVLLFLLGITEIEPIRFDLFFERFINPERLSYPDIDIDICMAGRERVINYAIERHGKDNVAQIITFGTMKAKMAVKDVGRTLDMALSKVNHIAKHIPDLNTTLSKALETDPDLHQLYINDAESAQVIDMALCLEGSIRNTGVHAAGVIICGDQLTNHIPICISKDSTMITTQYSMKPVESVGMLKVDLLGLKTLTSINIAMSAIEKKTGQSLAMATLPLDDATTFSLLHQGKTMGIFQMESKGMQELAKNLRPDLFEEIIAMGALYRPGPMDMIPSFINRKHGKEIIEYDHPLMESILKETYGIMVYQEQVMQIAGALASYSLGEGDVLRRAMGKKDFQQMEQEREKFCKRACNNGIDPELATVIFDKMEKFAAYGFNKSHAAAYGLITYTTAYLKANYPKEWLAALLTCDSDDIEKIGKLIREAQSMGIPILPPHINVSSNHFVATDEGIRFAMGAIKGIGRGLIESIVEERDHHGPYESIRDFIQRSDLKKVSKKSIESLIDAGCFDCFDSNRDLLLASVEPLYEAIAKDKKEAASGVMTFFTLGAMDRKNEVPICLPKDIPTRSKKELLKKEKELLGIYLTEHPMDTVRDHLSRLSVVLAGEFENLPHGSVVRTVFIIDKVTTKISSKAQKKFAVLRVSDGIDSYELPIWPDMYEEQQELLEEDRLIYAILVLDKRSDSLRISCRWMKDLSIVNENIIYECDQAFDRIKNQVQKMSFTMSTSGKETKAKGNKPNENGHTQALAPVTLSLDLNELRHSHLCILKKIVQKHPGSRTLVLVFTQDNERVASMSPDDAYFVCEDIEELRQELVTADLPVRVITV</sequence>
<gene>
    <name type="primary">dnaE</name>
    <name type="ordered locus">CPn_0666</name>
    <name type="ordered locus">CP_0081</name>
    <name type="ordered locus">CpB0692</name>
</gene>
<evidence type="ECO:0000250" key="1"/>
<evidence type="ECO:0000305" key="2"/>
<protein>
    <recommendedName>
        <fullName>DNA polymerase III subunit alpha</fullName>
        <ecNumber>2.7.7.7</ecNumber>
    </recommendedName>
</protein>
<keyword id="KW-0963">Cytoplasm</keyword>
<keyword id="KW-0235">DNA replication</keyword>
<keyword id="KW-0239">DNA-directed DNA polymerase</keyword>
<keyword id="KW-0548">Nucleotidyltransferase</keyword>
<keyword id="KW-0808">Transferase</keyword>
<comment type="function">
    <text evidence="1">DNA polymerase III is a complex, multichain enzyme responsible for most of the replicative synthesis in bacteria. This DNA polymerase also exhibits 3' to 5' exonuclease activity. The alpha chain is the DNA polymerase (By similarity).</text>
</comment>
<comment type="catalytic activity">
    <reaction>
        <text>DNA(n) + a 2'-deoxyribonucleoside 5'-triphosphate = DNA(n+1) + diphosphate</text>
        <dbReference type="Rhea" id="RHEA:22508"/>
        <dbReference type="Rhea" id="RHEA-COMP:17339"/>
        <dbReference type="Rhea" id="RHEA-COMP:17340"/>
        <dbReference type="ChEBI" id="CHEBI:33019"/>
        <dbReference type="ChEBI" id="CHEBI:61560"/>
        <dbReference type="ChEBI" id="CHEBI:173112"/>
        <dbReference type="EC" id="2.7.7.7"/>
    </reaction>
</comment>
<comment type="subunit">
    <text evidence="1">DNA polymerase III contains a core (composed of alpha, epsilon and theta chains) that associates with a tau subunit. This core dimerizes to form the PolIII' complex. PolIII' associates with the gamma complex (composed of gamma, delta, delta', psi and chi chains) and with the beta chain to form the complete DNA polymerase III complex (By similarity).</text>
</comment>
<comment type="subcellular location">
    <subcellularLocation>
        <location evidence="1">Cytoplasm</location>
    </subcellularLocation>
</comment>
<comment type="similarity">
    <text evidence="2">Belongs to the DNA polymerase type-C family. DnaE subfamily.</text>
</comment>
<organism>
    <name type="scientific">Chlamydia pneumoniae</name>
    <name type="common">Chlamydophila pneumoniae</name>
    <dbReference type="NCBI Taxonomy" id="83558"/>
    <lineage>
        <taxon>Bacteria</taxon>
        <taxon>Pseudomonadati</taxon>
        <taxon>Chlamydiota</taxon>
        <taxon>Chlamydiia</taxon>
        <taxon>Chlamydiales</taxon>
        <taxon>Chlamydiaceae</taxon>
        <taxon>Chlamydia/Chlamydophila group</taxon>
        <taxon>Chlamydia</taxon>
    </lineage>
</organism>
<reference key="1">
    <citation type="journal article" date="1999" name="Nat. Genet.">
        <title>Comparative genomes of Chlamydia pneumoniae and C. trachomatis.</title>
        <authorList>
            <person name="Kalman S."/>
            <person name="Mitchell W.P."/>
            <person name="Marathe R."/>
            <person name="Lammel C.J."/>
            <person name="Fan J."/>
            <person name="Hyman R.W."/>
            <person name="Olinger L."/>
            <person name="Grimwood J."/>
            <person name="Davis R.W."/>
            <person name="Stephens R.S."/>
        </authorList>
    </citation>
    <scope>NUCLEOTIDE SEQUENCE [LARGE SCALE GENOMIC DNA]</scope>
    <source>
        <strain>CWL029</strain>
    </source>
</reference>
<reference key="2">
    <citation type="journal article" date="2000" name="Nucleic Acids Res.">
        <title>Genome sequences of Chlamydia trachomatis MoPn and Chlamydia pneumoniae AR39.</title>
        <authorList>
            <person name="Read T.D."/>
            <person name="Brunham R.C."/>
            <person name="Shen C."/>
            <person name="Gill S.R."/>
            <person name="Heidelberg J.F."/>
            <person name="White O."/>
            <person name="Hickey E.K."/>
            <person name="Peterson J.D."/>
            <person name="Utterback T.R."/>
            <person name="Berry K.J."/>
            <person name="Bass S."/>
            <person name="Linher K.D."/>
            <person name="Weidman J.F."/>
            <person name="Khouri H.M."/>
            <person name="Craven B."/>
            <person name="Bowman C."/>
            <person name="Dodson R.J."/>
            <person name="Gwinn M.L."/>
            <person name="Nelson W.C."/>
            <person name="DeBoy R.T."/>
            <person name="Kolonay J.F."/>
            <person name="McClarty G."/>
            <person name="Salzberg S.L."/>
            <person name="Eisen J.A."/>
            <person name="Fraser C.M."/>
        </authorList>
    </citation>
    <scope>NUCLEOTIDE SEQUENCE [LARGE SCALE GENOMIC DNA]</scope>
    <source>
        <strain>AR39</strain>
    </source>
</reference>
<reference key="3">
    <citation type="journal article" date="2000" name="Nucleic Acids Res.">
        <title>Comparison of whole genome sequences of Chlamydia pneumoniae J138 from Japan and CWL029 from USA.</title>
        <authorList>
            <person name="Shirai M."/>
            <person name="Hirakawa H."/>
            <person name="Kimoto M."/>
            <person name="Tabuchi M."/>
            <person name="Kishi F."/>
            <person name="Ouchi K."/>
            <person name="Shiba T."/>
            <person name="Ishii K."/>
            <person name="Hattori M."/>
            <person name="Kuhara S."/>
            <person name="Nakazawa T."/>
        </authorList>
    </citation>
    <scope>NUCLEOTIDE SEQUENCE [LARGE SCALE GENOMIC DNA]</scope>
    <source>
        <strain>J138</strain>
    </source>
</reference>
<reference key="4">
    <citation type="submission" date="2002-05" db="EMBL/GenBank/DDBJ databases">
        <title>The genome sequence of Chlamydia pneumoniae TW183 and comparison with other Chlamydia strains based on whole genome sequence analysis.</title>
        <authorList>
            <person name="Geng M.M."/>
            <person name="Schuhmacher A."/>
            <person name="Muehldorfer I."/>
            <person name="Bensch K.W."/>
            <person name="Schaefer K.P."/>
            <person name="Schneider S."/>
            <person name="Pohl T."/>
            <person name="Essig A."/>
            <person name="Marre R."/>
            <person name="Melchers K."/>
        </authorList>
    </citation>
    <scope>NUCLEOTIDE SEQUENCE [LARGE SCALE GENOMIC DNA]</scope>
    <source>
        <strain>TW-183</strain>
    </source>
</reference>
<dbReference type="EC" id="2.7.7.7"/>
<dbReference type="EMBL" id="AE001363">
    <property type="protein sequence ID" value="AAD18805.1"/>
    <property type="molecule type" value="Genomic_DNA"/>
</dbReference>
<dbReference type="EMBL" id="AE002161">
    <property type="protein sequence ID" value="AAF37967.1"/>
    <property type="molecule type" value="Genomic_DNA"/>
</dbReference>
<dbReference type="EMBL" id="BA000008">
    <property type="protein sequence ID" value="BAA98873.1"/>
    <property type="molecule type" value="Genomic_DNA"/>
</dbReference>
<dbReference type="EMBL" id="AE009440">
    <property type="protein sequence ID" value="AAP98621.1"/>
    <property type="molecule type" value="Genomic_DNA"/>
</dbReference>
<dbReference type="PIR" id="B72050">
    <property type="entry name" value="B72050"/>
</dbReference>
<dbReference type="PIR" id="G86573">
    <property type="entry name" value="G86573"/>
</dbReference>
<dbReference type="RefSeq" id="NP_224862.1">
    <property type="nucleotide sequence ID" value="NC_000922.1"/>
</dbReference>
<dbReference type="RefSeq" id="WP_010883304.1">
    <property type="nucleotide sequence ID" value="NZ_LN847257.1"/>
</dbReference>
<dbReference type="SMR" id="Q9Z7N8"/>
<dbReference type="STRING" id="406984.CPK_ORF00066"/>
<dbReference type="GeneID" id="45050717"/>
<dbReference type="KEGG" id="cpa:CP_0081"/>
<dbReference type="KEGG" id="cpj:dnaE"/>
<dbReference type="KEGG" id="cpn:CPn_0666"/>
<dbReference type="KEGG" id="cpt:CpB0692"/>
<dbReference type="PATRIC" id="fig|115713.3.peg.736"/>
<dbReference type="eggNOG" id="COG0587">
    <property type="taxonomic scope" value="Bacteria"/>
</dbReference>
<dbReference type="HOGENOM" id="CLU_001600_0_0_0"/>
<dbReference type="OrthoDB" id="9803237at2"/>
<dbReference type="Proteomes" id="UP000000583">
    <property type="component" value="Chromosome"/>
</dbReference>
<dbReference type="Proteomes" id="UP000000801">
    <property type="component" value="Chromosome"/>
</dbReference>
<dbReference type="GO" id="GO:0005737">
    <property type="term" value="C:cytoplasm"/>
    <property type="evidence" value="ECO:0007669"/>
    <property type="project" value="UniProtKB-SubCell"/>
</dbReference>
<dbReference type="GO" id="GO:0008408">
    <property type="term" value="F:3'-5' exonuclease activity"/>
    <property type="evidence" value="ECO:0007669"/>
    <property type="project" value="InterPro"/>
</dbReference>
<dbReference type="GO" id="GO:0003887">
    <property type="term" value="F:DNA-directed DNA polymerase activity"/>
    <property type="evidence" value="ECO:0007669"/>
    <property type="project" value="UniProtKB-KW"/>
</dbReference>
<dbReference type="GO" id="GO:0006260">
    <property type="term" value="P:DNA replication"/>
    <property type="evidence" value="ECO:0007669"/>
    <property type="project" value="UniProtKB-KW"/>
</dbReference>
<dbReference type="CDD" id="cd12113">
    <property type="entry name" value="PHP_PolIIIA_DnaE3"/>
    <property type="match status" value="1"/>
</dbReference>
<dbReference type="Gene3D" id="1.10.150.870">
    <property type="match status" value="1"/>
</dbReference>
<dbReference type="Gene3D" id="1.10.10.1600">
    <property type="entry name" value="Bacterial DNA polymerase III alpha subunit, thumb domain"/>
    <property type="match status" value="1"/>
</dbReference>
<dbReference type="Gene3D" id="3.20.20.140">
    <property type="entry name" value="Metal-dependent hydrolases"/>
    <property type="match status" value="1"/>
</dbReference>
<dbReference type="InterPro" id="IPR011708">
    <property type="entry name" value="DNA_pol3_alpha_NTPase_dom"/>
</dbReference>
<dbReference type="InterPro" id="IPR041931">
    <property type="entry name" value="DNA_pol3_alpha_thumb_dom"/>
</dbReference>
<dbReference type="InterPro" id="IPR040982">
    <property type="entry name" value="DNA_pol3_finger"/>
</dbReference>
<dbReference type="InterPro" id="IPR004805">
    <property type="entry name" value="DnaE2/DnaE/PolC"/>
</dbReference>
<dbReference type="InterPro" id="IPR029460">
    <property type="entry name" value="DNAPol_HHH"/>
</dbReference>
<dbReference type="InterPro" id="IPR004013">
    <property type="entry name" value="PHP_dom"/>
</dbReference>
<dbReference type="InterPro" id="IPR003141">
    <property type="entry name" value="Pol/His_phosphatase_N"/>
</dbReference>
<dbReference type="InterPro" id="IPR016195">
    <property type="entry name" value="Pol/histidinol_Pase-like"/>
</dbReference>
<dbReference type="InterPro" id="IPR010994">
    <property type="entry name" value="RuvA_2-like"/>
</dbReference>
<dbReference type="NCBIfam" id="TIGR00594">
    <property type="entry name" value="polc"/>
    <property type="match status" value="1"/>
</dbReference>
<dbReference type="NCBIfam" id="NF004226">
    <property type="entry name" value="PRK05673.1"/>
    <property type="match status" value="1"/>
</dbReference>
<dbReference type="PANTHER" id="PTHR32294">
    <property type="entry name" value="DNA POLYMERASE III SUBUNIT ALPHA"/>
    <property type="match status" value="1"/>
</dbReference>
<dbReference type="PANTHER" id="PTHR32294:SF0">
    <property type="entry name" value="DNA POLYMERASE III SUBUNIT ALPHA"/>
    <property type="match status" value="1"/>
</dbReference>
<dbReference type="Pfam" id="PF07733">
    <property type="entry name" value="DNA_pol3_alpha"/>
    <property type="match status" value="1"/>
</dbReference>
<dbReference type="Pfam" id="PF17657">
    <property type="entry name" value="DNA_pol3_finger"/>
    <property type="match status" value="1"/>
</dbReference>
<dbReference type="Pfam" id="PF14579">
    <property type="entry name" value="HHH_6"/>
    <property type="match status" value="1"/>
</dbReference>
<dbReference type="Pfam" id="PF02811">
    <property type="entry name" value="PHP"/>
    <property type="match status" value="1"/>
</dbReference>
<dbReference type="SMART" id="SM00481">
    <property type="entry name" value="POLIIIAc"/>
    <property type="match status" value="1"/>
</dbReference>
<dbReference type="SUPFAM" id="SSF89550">
    <property type="entry name" value="PHP domain-like"/>
    <property type="match status" value="1"/>
</dbReference>
<dbReference type="SUPFAM" id="SSF47781">
    <property type="entry name" value="RuvA domain 2-like"/>
    <property type="match status" value="1"/>
</dbReference>
<accession>Q9Z7N8</accession>
<proteinExistence type="inferred from homology"/>
<feature type="chain" id="PRO_0000103318" description="DNA polymerase III subunit alpha">
    <location>
        <begin position="1"/>
        <end position="1240"/>
    </location>
</feature>